<accession>Q9LSQ2</accession>
<evidence type="ECO:0000255" key="1"/>
<evidence type="ECO:0000269" key="2">
    <source>
    </source>
</evidence>
<evidence type="ECO:0000305" key="3"/>
<dbReference type="EMBL" id="AB026636">
    <property type="protein sequence ID" value="BAA94973.1"/>
    <property type="molecule type" value="Genomic_DNA"/>
</dbReference>
<dbReference type="EMBL" id="CP002686">
    <property type="protein sequence ID" value="AEE75880.1"/>
    <property type="molecule type" value="Genomic_DNA"/>
</dbReference>
<dbReference type="RefSeq" id="NP_188314.1">
    <property type="nucleotide sequence ID" value="NM_112565.2"/>
</dbReference>
<dbReference type="SMR" id="Q9LSQ2"/>
<dbReference type="BioGRID" id="6277">
    <property type="interactions" value="8"/>
</dbReference>
<dbReference type="FunCoup" id="Q9LSQ2">
    <property type="interactions" value="143"/>
</dbReference>
<dbReference type="STRING" id="3702.Q9LSQ2"/>
<dbReference type="PaxDb" id="3702-AT3G16890.1"/>
<dbReference type="ProteomicsDB" id="249184"/>
<dbReference type="EnsemblPlants" id="AT3G16890.1">
    <property type="protein sequence ID" value="AT3G16890.1"/>
    <property type="gene ID" value="AT3G16890"/>
</dbReference>
<dbReference type="GeneID" id="820944"/>
<dbReference type="Gramene" id="AT3G16890.1">
    <property type="protein sequence ID" value="AT3G16890.1"/>
    <property type="gene ID" value="AT3G16890"/>
</dbReference>
<dbReference type="KEGG" id="ath:AT3G16890"/>
<dbReference type="Araport" id="AT3G16890"/>
<dbReference type="TAIR" id="AT3G16890">
    <property type="gene designation" value="PPR40"/>
</dbReference>
<dbReference type="eggNOG" id="KOG4197">
    <property type="taxonomic scope" value="Eukaryota"/>
</dbReference>
<dbReference type="HOGENOM" id="CLU_002706_49_12_1"/>
<dbReference type="InParanoid" id="Q9LSQ2"/>
<dbReference type="OrthoDB" id="185373at2759"/>
<dbReference type="PhylomeDB" id="Q9LSQ2"/>
<dbReference type="PRO" id="PR:Q9LSQ2"/>
<dbReference type="Proteomes" id="UP000006548">
    <property type="component" value="Chromosome 3"/>
</dbReference>
<dbReference type="ExpressionAtlas" id="Q9LSQ2">
    <property type="expression patterns" value="baseline and differential"/>
</dbReference>
<dbReference type="GO" id="GO:0005739">
    <property type="term" value="C:mitochondrion"/>
    <property type="evidence" value="ECO:0000314"/>
    <property type="project" value="TAIR"/>
</dbReference>
<dbReference type="GO" id="GO:0042775">
    <property type="term" value="P:mitochondrial ATP synthesis coupled electron transport"/>
    <property type="evidence" value="ECO:0000315"/>
    <property type="project" value="TAIR"/>
</dbReference>
<dbReference type="GO" id="GO:0009737">
    <property type="term" value="P:response to abscisic acid"/>
    <property type="evidence" value="ECO:0000315"/>
    <property type="project" value="TAIR"/>
</dbReference>
<dbReference type="GO" id="GO:0006979">
    <property type="term" value="P:response to oxidative stress"/>
    <property type="evidence" value="ECO:0000315"/>
    <property type="project" value="TAIR"/>
</dbReference>
<dbReference type="GO" id="GO:0009651">
    <property type="term" value="P:response to salt stress"/>
    <property type="evidence" value="ECO:0000315"/>
    <property type="project" value="TAIR"/>
</dbReference>
<dbReference type="Gene3D" id="1.25.40.10">
    <property type="entry name" value="Tetratricopeptide repeat domain"/>
    <property type="match status" value="5"/>
</dbReference>
<dbReference type="InterPro" id="IPR002885">
    <property type="entry name" value="Pentatricopeptide_rpt"/>
</dbReference>
<dbReference type="InterPro" id="IPR050667">
    <property type="entry name" value="PPR-containing_protein"/>
</dbReference>
<dbReference type="InterPro" id="IPR011990">
    <property type="entry name" value="TPR-like_helical_dom_sf"/>
</dbReference>
<dbReference type="NCBIfam" id="TIGR00756">
    <property type="entry name" value="PPR"/>
    <property type="match status" value="10"/>
</dbReference>
<dbReference type="PANTHER" id="PTHR47939">
    <property type="entry name" value="MEMBRANE-ASSOCIATED SALT-INDUCIBLE PROTEIN-LIKE"/>
    <property type="match status" value="1"/>
</dbReference>
<dbReference type="PANTHER" id="PTHR47939:SF13">
    <property type="entry name" value="OS03G0201400 PROTEIN"/>
    <property type="match status" value="1"/>
</dbReference>
<dbReference type="Pfam" id="PF01535">
    <property type="entry name" value="PPR"/>
    <property type="match status" value="1"/>
</dbReference>
<dbReference type="Pfam" id="PF13041">
    <property type="entry name" value="PPR_2"/>
    <property type="match status" value="4"/>
</dbReference>
<dbReference type="SUPFAM" id="SSF81901">
    <property type="entry name" value="HCP-like"/>
    <property type="match status" value="1"/>
</dbReference>
<dbReference type="PROSITE" id="PS51375">
    <property type="entry name" value="PPR"/>
    <property type="match status" value="14"/>
</dbReference>
<name>PP239_ARATH</name>
<proteinExistence type="inferred from homology"/>
<gene>
    <name type="primary">PPR40</name>
    <name type="ordered locus">At3g16890</name>
    <name type="ORF">K14A17.14</name>
</gene>
<comment type="function">
    <text evidence="2">Required for the ubiquinol-cytochrome c oxidoreductase activity of mitochondrial complex III.</text>
</comment>
<comment type="subcellular location">
    <subcellularLocation>
        <location evidence="2">Mitochondrion</location>
    </subcellularLocation>
</comment>
<comment type="similarity">
    <text evidence="3">Belongs to the PPR family. P subfamily.</text>
</comment>
<comment type="online information" name="Pentatricopeptide repeat proteins">
    <link uri="https://ppr.plantenergy.uwa.edu.au"/>
</comment>
<organism>
    <name type="scientific">Arabidopsis thaliana</name>
    <name type="common">Mouse-ear cress</name>
    <dbReference type="NCBI Taxonomy" id="3702"/>
    <lineage>
        <taxon>Eukaryota</taxon>
        <taxon>Viridiplantae</taxon>
        <taxon>Streptophyta</taxon>
        <taxon>Embryophyta</taxon>
        <taxon>Tracheophyta</taxon>
        <taxon>Spermatophyta</taxon>
        <taxon>Magnoliopsida</taxon>
        <taxon>eudicotyledons</taxon>
        <taxon>Gunneridae</taxon>
        <taxon>Pentapetalae</taxon>
        <taxon>rosids</taxon>
        <taxon>malvids</taxon>
        <taxon>Brassicales</taxon>
        <taxon>Brassicaceae</taxon>
        <taxon>Camelineae</taxon>
        <taxon>Arabidopsis</taxon>
    </lineage>
</organism>
<protein>
    <recommendedName>
        <fullName>Putative pentatricopeptide repeat-containing protein At3g16890, mitochondrial</fullName>
    </recommendedName>
    <alternativeName>
        <fullName>Protein PENTATRICOPEPTIDE REPEAT 40</fullName>
    </alternativeName>
</protein>
<reference key="1">
    <citation type="journal article" date="2000" name="DNA Res.">
        <title>Structural analysis of Arabidopsis thaliana chromosome 3. I. Sequence features of the regions of 4,504,864 bp covered by sixty P1 and TAC clones.</title>
        <authorList>
            <person name="Sato S."/>
            <person name="Nakamura Y."/>
            <person name="Kaneko T."/>
            <person name="Katoh T."/>
            <person name="Asamizu E."/>
            <person name="Tabata S."/>
        </authorList>
    </citation>
    <scope>NUCLEOTIDE SEQUENCE [LARGE SCALE GENOMIC DNA]</scope>
    <source>
        <strain>cv. Columbia</strain>
    </source>
</reference>
<reference key="2">
    <citation type="journal article" date="2017" name="Plant J.">
        <title>Araport11: a complete reannotation of the Arabidopsis thaliana reference genome.</title>
        <authorList>
            <person name="Cheng C.Y."/>
            <person name="Krishnakumar V."/>
            <person name="Chan A.P."/>
            <person name="Thibaud-Nissen F."/>
            <person name="Schobel S."/>
            <person name="Town C.D."/>
        </authorList>
    </citation>
    <scope>GENOME REANNOTATION</scope>
    <source>
        <strain>cv. Columbia</strain>
    </source>
</reference>
<reference key="3">
    <citation type="journal article" date="2004" name="Plant Cell">
        <title>Genome-wide analysis of Arabidopsis pentatricopeptide repeat proteins reveals their essential role in organelle biogenesis.</title>
        <authorList>
            <person name="Lurin C."/>
            <person name="Andres C."/>
            <person name="Aubourg S."/>
            <person name="Bellaoui M."/>
            <person name="Bitton F."/>
            <person name="Bruyere C."/>
            <person name="Caboche M."/>
            <person name="Debast C."/>
            <person name="Gualberto J."/>
            <person name="Hoffmann B."/>
            <person name="Lecharny A."/>
            <person name="Le Ret M."/>
            <person name="Martin-Magniette M.-L."/>
            <person name="Mireau H."/>
            <person name="Peeters N."/>
            <person name="Renou J.-P."/>
            <person name="Szurek B."/>
            <person name="Taconnat L."/>
            <person name="Small I."/>
        </authorList>
    </citation>
    <scope>GENE FAMILY</scope>
</reference>
<reference key="4">
    <citation type="journal article" date="2008" name="Plant Physiol.">
        <title>Arabidopsis PPR40 connects abiotic stress responses to mitochondrial electron transport.</title>
        <authorList>
            <person name="Zsigmond L."/>
            <person name="Rigo G."/>
            <person name="Szarka A."/>
            <person name="Szekely G."/>
            <person name="Oetvoes K."/>
            <person name="Darula Z."/>
            <person name="Medzihradszky K.F."/>
            <person name="Koncz C."/>
            <person name="Koncz Z."/>
            <person name="Szabados L."/>
        </authorList>
    </citation>
    <scope>FUNCTION</scope>
    <scope>SUBCELLULAR LOCATION</scope>
</reference>
<sequence>MRGFASSASRIATAAAASKSLNASTSVNPKLSKTLNSSGKPTNPLNQRYISQVIERKDWFLILNQEFTTHRIGLNTRFVISVLQNQDNPLHSLRFYLWVSNFDPVYAKDQSLKSVLGNALFRKGPLLLSMELLKEIRDSGYRISDELMCVLIGSWGRLGLAKYCNDVFAQISFLGMKPSTRLYNAVIDALVKSNSLDLAYLKFQQMRSDGCKPDRFTYNILIHGVCKKGVVDEAIRLVKQMEQEGNRPNVFTYTILIDGFLIAGRVDEALKQLEMMRVRKLNPNEATIRTFVHGIFRCLPPCKAFEVLVGFMEKDSNLQRVGYDAVLYCLSNNSMAKETGQFLRKIGERGYIPDSSTFNAAMSCLLKGHDLVETCRIFDGFVSRGVKPGFNGYLVLVQALLNAQRFSEGDRYLKQMGVDGLLSSVYSYNAVIDCLCKARRIENAAMFLTEMQDRGISPNLVTFNTFLSGYSVRGDVKKVHGVLEKLLVHGFKPDVITFSLIINCLCRAKEIKDAFDCFKEMLEWGIEPNEITYNILIRSCCSTGDTDRSVKLFAKMKENGLSPDLYAYNATIQSFCKMRKVKKAEELLKTMLRIGLKPDNFTYSTLIKALSESGRESEAREMFSSIERHGCVPDSYTKRLVEELDLRKSGLSRETVSAS</sequence>
<feature type="transit peptide" description="Mitochondrion" evidence="1">
    <location>
        <begin position="1"/>
        <end position="32"/>
    </location>
</feature>
<feature type="chain" id="PRO_0000356098" description="Putative pentatricopeptide repeat-containing protein At3g16890, mitochondrial">
    <location>
        <begin position="33"/>
        <end position="659"/>
    </location>
</feature>
<feature type="repeat" description="PPR 1">
    <location>
        <begin position="109"/>
        <end position="143"/>
    </location>
</feature>
<feature type="repeat" description="PPR 2">
    <location>
        <begin position="144"/>
        <end position="178"/>
    </location>
</feature>
<feature type="repeat" description="PPR 3">
    <location>
        <begin position="179"/>
        <end position="213"/>
    </location>
</feature>
<feature type="repeat" description="PPR 4">
    <location>
        <begin position="214"/>
        <end position="248"/>
    </location>
</feature>
<feature type="repeat" description="PPR 5">
    <location>
        <begin position="249"/>
        <end position="283"/>
    </location>
</feature>
<feature type="repeat" description="PPR 6">
    <location>
        <begin position="284"/>
        <end position="318"/>
    </location>
</feature>
<feature type="repeat" description="PPR 7">
    <location>
        <begin position="319"/>
        <end position="353"/>
    </location>
</feature>
<feature type="repeat" description="PPR 8">
    <location>
        <begin position="354"/>
        <end position="388"/>
    </location>
</feature>
<feature type="repeat" description="PPR 9">
    <location>
        <begin position="389"/>
        <end position="423"/>
    </location>
</feature>
<feature type="repeat" description="PPR 10">
    <location>
        <begin position="424"/>
        <end position="458"/>
    </location>
</feature>
<feature type="repeat" description="PPR 11">
    <location>
        <begin position="459"/>
        <end position="493"/>
    </location>
</feature>
<feature type="repeat" description="PPR 12">
    <location>
        <begin position="494"/>
        <end position="528"/>
    </location>
</feature>
<feature type="repeat" description="PPR 13">
    <location>
        <begin position="529"/>
        <end position="563"/>
    </location>
</feature>
<feature type="repeat" description="PPR 14">
    <location>
        <begin position="564"/>
        <end position="598"/>
    </location>
</feature>
<feature type="repeat" description="PPR 15">
    <location>
        <begin position="599"/>
        <end position="633"/>
    </location>
</feature>
<keyword id="KW-0496">Mitochondrion</keyword>
<keyword id="KW-1185">Reference proteome</keyword>
<keyword id="KW-0677">Repeat</keyword>
<keyword id="KW-0809">Transit peptide</keyword>